<keyword id="KW-0963">Cytoplasm</keyword>
<keyword id="KW-0312">Gluconeogenesis</keyword>
<keyword id="KW-0324">Glycolysis</keyword>
<keyword id="KW-0413">Isomerase</keyword>
<keyword id="KW-1185">Reference proteome</keyword>
<protein>
    <recommendedName>
        <fullName evidence="1">Triosephosphate isomerase</fullName>
        <shortName evidence="1">TIM</shortName>
        <shortName evidence="1">TPI</shortName>
        <ecNumber evidence="1">5.3.1.1</ecNumber>
    </recommendedName>
    <alternativeName>
        <fullName evidence="1">Triose-phosphate isomerase</fullName>
    </alternativeName>
</protein>
<feature type="chain" id="PRO_0000307496" description="Triosephosphate isomerase">
    <location>
        <begin position="1"/>
        <end position="255"/>
    </location>
</feature>
<feature type="active site" description="Electrophile" evidence="1">
    <location>
        <position position="96"/>
    </location>
</feature>
<feature type="active site" description="Proton acceptor" evidence="1">
    <location>
        <position position="170"/>
    </location>
</feature>
<feature type="binding site" evidence="1">
    <location>
        <begin position="9"/>
        <end position="11"/>
    </location>
    <ligand>
        <name>substrate</name>
    </ligand>
</feature>
<feature type="binding site" evidence="1">
    <location>
        <position position="176"/>
    </location>
    <ligand>
        <name>substrate</name>
    </ligand>
</feature>
<feature type="binding site" evidence="1">
    <location>
        <position position="216"/>
    </location>
    <ligand>
        <name>substrate</name>
    </ligand>
</feature>
<feature type="binding site" evidence="1">
    <location>
        <begin position="237"/>
        <end position="238"/>
    </location>
    <ligand>
        <name>substrate</name>
    </ligand>
</feature>
<reference key="1">
    <citation type="journal article" date="2009" name="Appl. Environ. Microbiol.">
        <title>Complete genome sequence of the chemolithoautotrophic marine magnetotactic coccus strain MC-1.</title>
        <authorList>
            <person name="Schubbe S."/>
            <person name="Williams T.J."/>
            <person name="Xie G."/>
            <person name="Kiss H.E."/>
            <person name="Brettin T.S."/>
            <person name="Martinez D."/>
            <person name="Ross C.A."/>
            <person name="Schuler D."/>
            <person name="Cox B.L."/>
            <person name="Nealson K.H."/>
            <person name="Bazylinski D.A."/>
        </authorList>
    </citation>
    <scope>NUCLEOTIDE SEQUENCE [LARGE SCALE GENOMIC DNA]</scope>
    <source>
        <strain>ATCC BAA-1437 / JCM 17883 / MC-1</strain>
    </source>
</reference>
<proteinExistence type="inferred from homology"/>
<comment type="function">
    <text evidence="1">Involved in the gluconeogenesis. Catalyzes stereospecifically the conversion of dihydroxyacetone phosphate (DHAP) to D-glyceraldehyde-3-phosphate (G3P).</text>
</comment>
<comment type="catalytic activity">
    <reaction evidence="1">
        <text>D-glyceraldehyde 3-phosphate = dihydroxyacetone phosphate</text>
        <dbReference type="Rhea" id="RHEA:18585"/>
        <dbReference type="ChEBI" id="CHEBI:57642"/>
        <dbReference type="ChEBI" id="CHEBI:59776"/>
        <dbReference type="EC" id="5.3.1.1"/>
    </reaction>
</comment>
<comment type="pathway">
    <text evidence="1">Carbohydrate biosynthesis; gluconeogenesis.</text>
</comment>
<comment type="pathway">
    <text evidence="1">Carbohydrate degradation; glycolysis; D-glyceraldehyde 3-phosphate from glycerone phosphate: step 1/1.</text>
</comment>
<comment type="subunit">
    <text evidence="1">Homodimer.</text>
</comment>
<comment type="subcellular location">
    <subcellularLocation>
        <location evidence="1">Cytoplasm</location>
    </subcellularLocation>
</comment>
<comment type="similarity">
    <text evidence="1">Belongs to the triosephosphate isomerase family.</text>
</comment>
<sequence length="255" mass="26398">MRRALIAGNWKLNGTTQAATALATAVRDGVAANKPDCDVLVCPTFTVLSAVQGVVAGSGVDLGAQNMAVASSGAFTGEISGEMLKDVGCSYVILGHSERRTLFGETNEQVAQKVASAYRDGLTPILCVGETLEQREAEQTMQVLEQQLLACLPVLPADAAKQQQLVVAYEPVWAIGTGKVASTAQAQEAHAFIRGLLAKELGANVADAVRILYGGSMKPDNAKELLGQADVDGGLIGGAALKANDFLAIMDGLTA</sequence>
<evidence type="ECO:0000255" key="1">
    <source>
        <dbReference type="HAMAP-Rule" id="MF_00147"/>
    </source>
</evidence>
<gene>
    <name evidence="1" type="primary">tpiA</name>
    <name type="ordered locus">Mmc1_1885</name>
</gene>
<organism>
    <name type="scientific">Magnetococcus marinus (strain ATCC BAA-1437 / JCM 17883 / MC-1)</name>
    <dbReference type="NCBI Taxonomy" id="156889"/>
    <lineage>
        <taxon>Bacteria</taxon>
        <taxon>Pseudomonadati</taxon>
        <taxon>Pseudomonadota</taxon>
        <taxon>Alphaproteobacteria</taxon>
        <taxon>Magnetococcales</taxon>
        <taxon>Magnetococcaceae</taxon>
        <taxon>Magnetococcus</taxon>
    </lineage>
</organism>
<name>TPIS_MAGMM</name>
<dbReference type="EC" id="5.3.1.1" evidence="1"/>
<dbReference type="EMBL" id="CP000471">
    <property type="protein sequence ID" value="ABK44393.1"/>
    <property type="molecule type" value="Genomic_DNA"/>
</dbReference>
<dbReference type="RefSeq" id="WP_011713537.1">
    <property type="nucleotide sequence ID" value="NC_008576.1"/>
</dbReference>
<dbReference type="SMR" id="A0L8V0"/>
<dbReference type="STRING" id="156889.Mmc1_1885"/>
<dbReference type="KEGG" id="mgm:Mmc1_1885"/>
<dbReference type="eggNOG" id="COG0149">
    <property type="taxonomic scope" value="Bacteria"/>
</dbReference>
<dbReference type="HOGENOM" id="CLU_024251_2_3_5"/>
<dbReference type="OrthoDB" id="9809429at2"/>
<dbReference type="UniPathway" id="UPA00109">
    <property type="reaction ID" value="UER00189"/>
</dbReference>
<dbReference type="UniPathway" id="UPA00138"/>
<dbReference type="Proteomes" id="UP000002586">
    <property type="component" value="Chromosome"/>
</dbReference>
<dbReference type="GO" id="GO:0005829">
    <property type="term" value="C:cytosol"/>
    <property type="evidence" value="ECO:0007669"/>
    <property type="project" value="TreeGrafter"/>
</dbReference>
<dbReference type="GO" id="GO:0004807">
    <property type="term" value="F:triose-phosphate isomerase activity"/>
    <property type="evidence" value="ECO:0007669"/>
    <property type="project" value="UniProtKB-UniRule"/>
</dbReference>
<dbReference type="GO" id="GO:0006094">
    <property type="term" value="P:gluconeogenesis"/>
    <property type="evidence" value="ECO:0007669"/>
    <property type="project" value="UniProtKB-UniRule"/>
</dbReference>
<dbReference type="GO" id="GO:0046166">
    <property type="term" value="P:glyceraldehyde-3-phosphate biosynthetic process"/>
    <property type="evidence" value="ECO:0007669"/>
    <property type="project" value="TreeGrafter"/>
</dbReference>
<dbReference type="GO" id="GO:0019563">
    <property type="term" value="P:glycerol catabolic process"/>
    <property type="evidence" value="ECO:0007669"/>
    <property type="project" value="TreeGrafter"/>
</dbReference>
<dbReference type="GO" id="GO:0006096">
    <property type="term" value="P:glycolytic process"/>
    <property type="evidence" value="ECO:0007669"/>
    <property type="project" value="UniProtKB-UniRule"/>
</dbReference>
<dbReference type="CDD" id="cd00311">
    <property type="entry name" value="TIM"/>
    <property type="match status" value="1"/>
</dbReference>
<dbReference type="FunFam" id="3.20.20.70:FF:000016">
    <property type="entry name" value="Triosephosphate isomerase"/>
    <property type="match status" value="1"/>
</dbReference>
<dbReference type="Gene3D" id="3.20.20.70">
    <property type="entry name" value="Aldolase class I"/>
    <property type="match status" value="1"/>
</dbReference>
<dbReference type="HAMAP" id="MF_00147_B">
    <property type="entry name" value="TIM_B"/>
    <property type="match status" value="1"/>
</dbReference>
<dbReference type="InterPro" id="IPR013785">
    <property type="entry name" value="Aldolase_TIM"/>
</dbReference>
<dbReference type="InterPro" id="IPR035990">
    <property type="entry name" value="TIM_sf"/>
</dbReference>
<dbReference type="InterPro" id="IPR022896">
    <property type="entry name" value="TrioseP_Isoase_bac/euk"/>
</dbReference>
<dbReference type="InterPro" id="IPR000652">
    <property type="entry name" value="Triosephosphate_isomerase"/>
</dbReference>
<dbReference type="InterPro" id="IPR020861">
    <property type="entry name" value="Triosephosphate_isomerase_AS"/>
</dbReference>
<dbReference type="NCBIfam" id="TIGR00419">
    <property type="entry name" value="tim"/>
    <property type="match status" value="1"/>
</dbReference>
<dbReference type="PANTHER" id="PTHR21139">
    <property type="entry name" value="TRIOSEPHOSPHATE ISOMERASE"/>
    <property type="match status" value="1"/>
</dbReference>
<dbReference type="PANTHER" id="PTHR21139:SF42">
    <property type="entry name" value="TRIOSEPHOSPHATE ISOMERASE"/>
    <property type="match status" value="1"/>
</dbReference>
<dbReference type="Pfam" id="PF00121">
    <property type="entry name" value="TIM"/>
    <property type="match status" value="1"/>
</dbReference>
<dbReference type="SUPFAM" id="SSF51351">
    <property type="entry name" value="Triosephosphate isomerase (TIM)"/>
    <property type="match status" value="1"/>
</dbReference>
<dbReference type="PROSITE" id="PS00171">
    <property type="entry name" value="TIM_1"/>
    <property type="match status" value="1"/>
</dbReference>
<dbReference type="PROSITE" id="PS51440">
    <property type="entry name" value="TIM_2"/>
    <property type="match status" value="1"/>
</dbReference>
<accession>A0L8V0</accession>